<feature type="chain" id="PRO_0000155993" description="dCTP deaminase, dUMP-forming">
    <location>
        <begin position="1"/>
        <end position="173"/>
    </location>
</feature>
<feature type="active site" description="Proton donor/acceptor" evidence="1">
    <location>
        <position position="121"/>
    </location>
</feature>
<feature type="binding site" evidence="1">
    <location>
        <begin position="93"/>
        <end position="98"/>
    </location>
    <ligand>
        <name>dCTP</name>
        <dbReference type="ChEBI" id="CHEBI:61481"/>
    </ligand>
</feature>
<feature type="binding site" evidence="1">
    <location>
        <position position="111"/>
    </location>
    <ligand>
        <name>dCTP</name>
        <dbReference type="ChEBI" id="CHEBI:61481"/>
    </ligand>
</feature>
<feature type="binding site" evidence="1">
    <location>
        <begin position="119"/>
        <end position="121"/>
    </location>
    <ligand>
        <name>dCTP</name>
        <dbReference type="ChEBI" id="CHEBI:61481"/>
    </ligand>
</feature>
<feature type="binding site" evidence="1">
    <location>
        <position position="138"/>
    </location>
    <ligand>
        <name>dCTP</name>
        <dbReference type="ChEBI" id="CHEBI:61481"/>
    </ligand>
</feature>
<feature type="site" description="Important for bifunctional activity" evidence="1">
    <location>
        <begin position="108"/>
        <end position="109"/>
    </location>
</feature>
<comment type="function">
    <text evidence="1">Bifunctional enzyme that catalyzes both the deamination of dCTP to dUTP and the hydrolysis of dUTP to dUMP without releasing the toxic dUTP intermediate.</text>
</comment>
<comment type="catalytic activity">
    <reaction evidence="1">
        <text>dCTP + 2 H2O = dUMP + NH4(+) + diphosphate</text>
        <dbReference type="Rhea" id="RHEA:19205"/>
        <dbReference type="ChEBI" id="CHEBI:15377"/>
        <dbReference type="ChEBI" id="CHEBI:28938"/>
        <dbReference type="ChEBI" id="CHEBI:33019"/>
        <dbReference type="ChEBI" id="CHEBI:61481"/>
        <dbReference type="ChEBI" id="CHEBI:246422"/>
        <dbReference type="EC" id="3.5.4.30"/>
    </reaction>
</comment>
<comment type="pathway">
    <text evidence="1">Pyrimidine metabolism; dUMP biosynthesis; dUMP from dCTP: step 1/1.</text>
</comment>
<comment type="subunit">
    <text evidence="1">Homotrimer.</text>
</comment>
<comment type="similarity">
    <text evidence="1">Belongs to the dCTP deaminase family.</text>
</comment>
<reference key="1">
    <citation type="journal article" date="2004" name="J. Bacteriol.">
        <title>Comparative genomics of two Leptospira interrogans serovars reveals novel insights into physiology and pathogenesis.</title>
        <authorList>
            <person name="Nascimento A.L.T.O."/>
            <person name="Ko A.I."/>
            <person name="Martins E.A.L."/>
            <person name="Monteiro-Vitorello C.B."/>
            <person name="Ho P.L."/>
            <person name="Haake D.A."/>
            <person name="Verjovski-Almeida S."/>
            <person name="Hartskeerl R.A."/>
            <person name="Marques M.V."/>
            <person name="Oliveira M.C."/>
            <person name="Menck C.F.M."/>
            <person name="Leite L.C.C."/>
            <person name="Carrer H."/>
            <person name="Coutinho L.L."/>
            <person name="Degrave W.M."/>
            <person name="Dellagostin O.A."/>
            <person name="El-Dorry H."/>
            <person name="Ferro E.S."/>
            <person name="Ferro M.I.T."/>
            <person name="Furlan L.R."/>
            <person name="Gamberini M."/>
            <person name="Giglioti E.A."/>
            <person name="Goes-Neto A."/>
            <person name="Goldman G.H."/>
            <person name="Goldman M.H.S."/>
            <person name="Harakava R."/>
            <person name="Jeronimo S.M.B."/>
            <person name="Junqueira-de-Azevedo I.L.M."/>
            <person name="Kimura E.T."/>
            <person name="Kuramae E.E."/>
            <person name="Lemos E.G.M."/>
            <person name="Lemos M.V.F."/>
            <person name="Marino C.L."/>
            <person name="Nunes L.R."/>
            <person name="de Oliveira R.C."/>
            <person name="Pereira G.G."/>
            <person name="Reis M.S."/>
            <person name="Schriefer A."/>
            <person name="Siqueira W.J."/>
            <person name="Sommer P."/>
            <person name="Tsai S.M."/>
            <person name="Simpson A.J.G."/>
            <person name="Ferro J.A."/>
            <person name="Camargo L.E.A."/>
            <person name="Kitajima J.P."/>
            <person name="Setubal J.C."/>
            <person name="Van Sluys M.A."/>
        </authorList>
    </citation>
    <scope>NUCLEOTIDE SEQUENCE [LARGE SCALE GENOMIC DNA]</scope>
    <source>
        <strain>Fiocruz L1-130</strain>
    </source>
</reference>
<accession>Q72W72</accession>
<gene>
    <name evidence="1" type="primary">dcd</name>
    <name type="ordered locus">LIC_10065</name>
</gene>
<protein>
    <recommendedName>
        <fullName evidence="1">dCTP deaminase, dUMP-forming</fullName>
        <ecNumber evidence="1">3.5.4.30</ecNumber>
    </recommendedName>
    <alternativeName>
        <fullName evidence="1">Bifunctional dCTP deaminase:dUTPase</fullName>
    </alternativeName>
    <alternativeName>
        <fullName evidence="1">DCD-DUT</fullName>
    </alternativeName>
</protein>
<proteinExistence type="inferred from homology"/>
<sequence length="173" mass="19528">MILTGKEIQKRIGNDIVITPYSEKQLNPNSYNLRLHEELLVYTELPLDMKKPNPAEKLVIPESGLLLKPGILYLGRTLESTETHNLVPMLEGRSSIGRLGMLVHVTAGFGDVGFKGFWTLEISVIQPLIVYPGVEVCQIFYHTLEGQITEYTSGKYQANRGIQTSMLYKDFEK</sequence>
<name>DCDB_LEPIC</name>
<keyword id="KW-0378">Hydrolase</keyword>
<keyword id="KW-0546">Nucleotide metabolism</keyword>
<keyword id="KW-0547">Nucleotide-binding</keyword>
<evidence type="ECO:0000255" key="1">
    <source>
        <dbReference type="HAMAP-Rule" id="MF_00146"/>
    </source>
</evidence>
<organism>
    <name type="scientific">Leptospira interrogans serogroup Icterohaemorrhagiae serovar copenhageni (strain Fiocruz L1-130)</name>
    <dbReference type="NCBI Taxonomy" id="267671"/>
    <lineage>
        <taxon>Bacteria</taxon>
        <taxon>Pseudomonadati</taxon>
        <taxon>Spirochaetota</taxon>
        <taxon>Spirochaetia</taxon>
        <taxon>Leptospirales</taxon>
        <taxon>Leptospiraceae</taxon>
        <taxon>Leptospira</taxon>
    </lineage>
</organism>
<dbReference type="EC" id="3.5.4.30" evidence="1"/>
<dbReference type="EMBL" id="AE016823">
    <property type="protein sequence ID" value="AAS68702.1"/>
    <property type="molecule type" value="Genomic_DNA"/>
</dbReference>
<dbReference type="RefSeq" id="WP_000604072.1">
    <property type="nucleotide sequence ID" value="NC_005823.1"/>
</dbReference>
<dbReference type="SMR" id="Q72W72"/>
<dbReference type="GeneID" id="61143420"/>
<dbReference type="KEGG" id="lic:LIC_10065"/>
<dbReference type="HOGENOM" id="CLU_087476_0_1_12"/>
<dbReference type="UniPathway" id="UPA00610">
    <property type="reaction ID" value="UER00667"/>
</dbReference>
<dbReference type="Proteomes" id="UP000007037">
    <property type="component" value="Chromosome I"/>
</dbReference>
<dbReference type="GO" id="GO:0033973">
    <property type="term" value="F:dCTP deaminase (dUMP-forming) activity"/>
    <property type="evidence" value="ECO:0007669"/>
    <property type="project" value="UniProtKB-UniRule"/>
</dbReference>
<dbReference type="GO" id="GO:0008829">
    <property type="term" value="F:dCTP deaminase activity"/>
    <property type="evidence" value="ECO:0007669"/>
    <property type="project" value="InterPro"/>
</dbReference>
<dbReference type="GO" id="GO:0000166">
    <property type="term" value="F:nucleotide binding"/>
    <property type="evidence" value="ECO:0007669"/>
    <property type="project" value="UniProtKB-KW"/>
</dbReference>
<dbReference type="GO" id="GO:0006226">
    <property type="term" value="P:dUMP biosynthetic process"/>
    <property type="evidence" value="ECO:0007669"/>
    <property type="project" value="UniProtKB-UniRule"/>
</dbReference>
<dbReference type="GO" id="GO:0006229">
    <property type="term" value="P:dUTP biosynthetic process"/>
    <property type="evidence" value="ECO:0007669"/>
    <property type="project" value="InterPro"/>
</dbReference>
<dbReference type="GO" id="GO:0015949">
    <property type="term" value="P:nucleobase-containing small molecule interconversion"/>
    <property type="evidence" value="ECO:0007669"/>
    <property type="project" value="TreeGrafter"/>
</dbReference>
<dbReference type="CDD" id="cd07557">
    <property type="entry name" value="trimeric_dUTPase"/>
    <property type="match status" value="1"/>
</dbReference>
<dbReference type="FunFam" id="2.70.40.10:FF:000009">
    <property type="entry name" value="dCTP deaminase, dUMP-forming"/>
    <property type="match status" value="1"/>
</dbReference>
<dbReference type="Gene3D" id="2.70.40.10">
    <property type="match status" value="1"/>
</dbReference>
<dbReference type="HAMAP" id="MF_00146">
    <property type="entry name" value="dCTP_deaminase"/>
    <property type="match status" value="1"/>
</dbReference>
<dbReference type="InterPro" id="IPR011962">
    <property type="entry name" value="dCTP_deaminase"/>
</dbReference>
<dbReference type="InterPro" id="IPR036157">
    <property type="entry name" value="dUTPase-like_sf"/>
</dbReference>
<dbReference type="InterPro" id="IPR033704">
    <property type="entry name" value="dUTPase_trimeric"/>
</dbReference>
<dbReference type="NCBIfam" id="TIGR02274">
    <property type="entry name" value="dCTP_deam"/>
    <property type="match status" value="1"/>
</dbReference>
<dbReference type="PANTHER" id="PTHR42680">
    <property type="entry name" value="DCTP DEAMINASE"/>
    <property type="match status" value="1"/>
</dbReference>
<dbReference type="PANTHER" id="PTHR42680:SF3">
    <property type="entry name" value="DCTP DEAMINASE"/>
    <property type="match status" value="1"/>
</dbReference>
<dbReference type="Pfam" id="PF22769">
    <property type="entry name" value="DCD"/>
    <property type="match status" value="1"/>
</dbReference>
<dbReference type="SUPFAM" id="SSF51283">
    <property type="entry name" value="dUTPase-like"/>
    <property type="match status" value="1"/>
</dbReference>